<organism>
    <name type="scientific">Acidothermus cellulolyticus (strain ATCC 43068 / DSM 8971 / 11B)</name>
    <dbReference type="NCBI Taxonomy" id="351607"/>
    <lineage>
        <taxon>Bacteria</taxon>
        <taxon>Bacillati</taxon>
        <taxon>Actinomycetota</taxon>
        <taxon>Actinomycetes</taxon>
        <taxon>Acidothermales</taxon>
        <taxon>Acidothermaceae</taxon>
        <taxon>Acidothermus</taxon>
    </lineage>
</organism>
<feature type="chain" id="PRO_0000286186" description="Spermidine/putrescine import ATP-binding protein PotA">
    <location>
        <begin position="1"/>
        <end position="383"/>
    </location>
</feature>
<feature type="domain" description="ABC transporter" evidence="1">
    <location>
        <begin position="12"/>
        <end position="246"/>
    </location>
</feature>
<feature type="binding site" evidence="1">
    <location>
        <begin position="48"/>
        <end position="55"/>
    </location>
    <ligand>
        <name>ATP</name>
        <dbReference type="ChEBI" id="CHEBI:30616"/>
    </ligand>
</feature>
<evidence type="ECO:0000255" key="1">
    <source>
        <dbReference type="HAMAP-Rule" id="MF_01726"/>
    </source>
</evidence>
<accession>A0LUE6</accession>
<reference key="1">
    <citation type="journal article" date="2009" name="Genome Res.">
        <title>Complete genome of the cellulolytic thermophile Acidothermus cellulolyticus 11B provides insights into its ecophysiological and evolutionary adaptations.</title>
        <authorList>
            <person name="Barabote R.D."/>
            <person name="Xie G."/>
            <person name="Leu D.H."/>
            <person name="Normand P."/>
            <person name="Necsulea A."/>
            <person name="Daubin V."/>
            <person name="Medigue C."/>
            <person name="Adney W.S."/>
            <person name="Xu X.C."/>
            <person name="Lapidus A."/>
            <person name="Parales R.E."/>
            <person name="Detter C."/>
            <person name="Pujic P."/>
            <person name="Bruce D."/>
            <person name="Lavire C."/>
            <person name="Challacombe J.F."/>
            <person name="Brettin T.S."/>
            <person name="Berry A.M."/>
        </authorList>
    </citation>
    <scope>NUCLEOTIDE SEQUENCE [LARGE SCALE GENOMIC DNA]</scope>
    <source>
        <strain>ATCC 43068 / DSM 8971 / 11B</strain>
    </source>
</reference>
<comment type="function">
    <text evidence="1">Part of the ABC transporter complex PotABCD involved in spermidine/putrescine import. Responsible for energy coupling to the transport system.</text>
</comment>
<comment type="catalytic activity">
    <reaction evidence="1">
        <text>ATP + H2O + polyamine-[polyamine-binding protein]Side 1 = ADP + phosphate + polyamineSide 2 + [polyamine-binding protein]Side 1.</text>
        <dbReference type="EC" id="7.6.2.11"/>
    </reaction>
</comment>
<comment type="subunit">
    <text evidence="1">The complex is composed of two ATP-binding proteins (PotA), two transmembrane proteins (PotB and PotC) and a solute-binding protein (PotD).</text>
</comment>
<comment type="subcellular location">
    <subcellularLocation>
        <location evidence="1">Cell membrane</location>
        <topology evidence="1">Peripheral membrane protein</topology>
    </subcellularLocation>
</comment>
<comment type="similarity">
    <text evidence="1">Belongs to the ABC transporter superfamily. Spermidine/putrescine importer (TC 3.A.1.11.1) family.</text>
</comment>
<proteinExistence type="inferred from homology"/>
<dbReference type="EC" id="7.6.2.11" evidence="1"/>
<dbReference type="EMBL" id="CP000481">
    <property type="protein sequence ID" value="ABK53056.1"/>
    <property type="molecule type" value="Genomic_DNA"/>
</dbReference>
<dbReference type="RefSeq" id="WP_011720119.1">
    <property type="nucleotide sequence ID" value="NC_008578.1"/>
</dbReference>
<dbReference type="SMR" id="A0LUE6"/>
<dbReference type="FunCoup" id="A0LUE6">
    <property type="interactions" value="65"/>
</dbReference>
<dbReference type="STRING" id="351607.Acel_1284"/>
<dbReference type="KEGG" id="ace:Acel_1284"/>
<dbReference type="eggNOG" id="COG3842">
    <property type="taxonomic scope" value="Bacteria"/>
</dbReference>
<dbReference type="HOGENOM" id="CLU_000604_1_1_11"/>
<dbReference type="InParanoid" id="A0LUE6"/>
<dbReference type="OrthoDB" id="7838608at2"/>
<dbReference type="Proteomes" id="UP000008221">
    <property type="component" value="Chromosome"/>
</dbReference>
<dbReference type="GO" id="GO:0043190">
    <property type="term" value="C:ATP-binding cassette (ABC) transporter complex"/>
    <property type="evidence" value="ECO:0007669"/>
    <property type="project" value="InterPro"/>
</dbReference>
<dbReference type="GO" id="GO:0015594">
    <property type="term" value="F:ABC-type putrescine transporter activity"/>
    <property type="evidence" value="ECO:0007669"/>
    <property type="project" value="InterPro"/>
</dbReference>
<dbReference type="GO" id="GO:0005524">
    <property type="term" value="F:ATP binding"/>
    <property type="evidence" value="ECO:0007669"/>
    <property type="project" value="UniProtKB-KW"/>
</dbReference>
<dbReference type="GO" id="GO:0016887">
    <property type="term" value="F:ATP hydrolysis activity"/>
    <property type="evidence" value="ECO:0007669"/>
    <property type="project" value="InterPro"/>
</dbReference>
<dbReference type="CDD" id="cd03300">
    <property type="entry name" value="ABC_PotA_N"/>
    <property type="match status" value="1"/>
</dbReference>
<dbReference type="FunFam" id="3.40.50.300:FF:000133">
    <property type="entry name" value="Spermidine/putrescine import ATP-binding protein PotA"/>
    <property type="match status" value="1"/>
</dbReference>
<dbReference type="Gene3D" id="2.40.50.100">
    <property type="match status" value="1"/>
</dbReference>
<dbReference type="Gene3D" id="3.40.50.300">
    <property type="entry name" value="P-loop containing nucleotide triphosphate hydrolases"/>
    <property type="match status" value="1"/>
</dbReference>
<dbReference type="InterPro" id="IPR003593">
    <property type="entry name" value="AAA+_ATPase"/>
</dbReference>
<dbReference type="InterPro" id="IPR050093">
    <property type="entry name" value="ABC_SmlMolc_Importer"/>
</dbReference>
<dbReference type="InterPro" id="IPR003439">
    <property type="entry name" value="ABC_transporter-like_ATP-bd"/>
</dbReference>
<dbReference type="InterPro" id="IPR017871">
    <property type="entry name" value="ABC_transporter-like_CS"/>
</dbReference>
<dbReference type="InterPro" id="IPR008995">
    <property type="entry name" value="Mo/tungstate-bd_C_term_dom"/>
</dbReference>
<dbReference type="InterPro" id="IPR027417">
    <property type="entry name" value="P-loop_NTPase"/>
</dbReference>
<dbReference type="InterPro" id="IPR005893">
    <property type="entry name" value="PotA-like"/>
</dbReference>
<dbReference type="InterPro" id="IPR017879">
    <property type="entry name" value="PotA_ATP-bd"/>
</dbReference>
<dbReference type="InterPro" id="IPR013611">
    <property type="entry name" value="Transp-assoc_OB_typ2"/>
</dbReference>
<dbReference type="NCBIfam" id="TIGR01187">
    <property type="entry name" value="potA"/>
    <property type="match status" value="1"/>
</dbReference>
<dbReference type="PANTHER" id="PTHR42781">
    <property type="entry name" value="SPERMIDINE/PUTRESCINE IMPORT ATP-BINDING PROTEIN POTA"/>
    <property type="match status" value="1"/>
</dbReference>
<dbReference type="PANTHER" id="PTHR42781:SF4">
    <property type="entry name" value="SPERMIDINE_PUTRESCINE IMPORT ATP-BINDING PROTEIN POTA"/>
    <property type="match status" value="1"/>
</dbReference>
<dbReference type="Pfam" id="PF00005">
    <property type="entry name" value="ABC_tran"/>
    <property type="match status" value="1"/>
</dbReference>
<dbReference type="Pfam" id="PF08402">
    <property type="entry name" value="TOBE_2"/>
    <property type="match status" value="1"/>
</dbReference>
<dbReference type="SMART" id="SM00382">
    <property type="entry name" value="AAA"/>
    <property type="match status" value="1"/>
</dbReference>
<dbReference type="SUPFAM" id="SSF50331">
    <property type="entry name" value="MOP-like"/>
    <property type="match status" value="1"/>
</dbReference>
<dbReference type="SUPFAM" id="SSF52540">
    <property type="entry name" value="P-loop containing nucleoside triphosphate hydrolases"/>
    <property type="match status" value="1"/>
</dbReference>
<dbReference type="PROSITE" id="PS00211">
    <property type="entry name" value="ABC_TRANSPORTER_1"/>
    <property type="match status" value="1"/>
</dbReference>
<dbReference type="PROSITE" id="PS50893">
    <property type="entry name" value="ABC_TRANSPORTER_2"/>
    <property type="match status" value="1"/>
</dbReference>
<dbReference type="PROSITE" id="PS51305">
    <property type="entry name" value="POTA"/>
    <property type="match status" value="1"/>
</dbReference>
<sequence>MTDYTPDETPGIALRDISKVYSSRTGDVVAVHALTLAVRSGEFFSLLGPSGCGKTTTLRMIAGFEEPTTGRILLEGRDVTDVPPHRRDVNMVFQNYALFPHLTVWENVAFGPKRKKLPREEIRRRVGEALELVDLVGREKRRPDELSGGQQQRVALARALVNRPRALLLDEPLGALDLKLRQAMQLELKRIQREAGVTFVYVTHDQGEALTMSDRIAVMNAGRVEQLGTPREIYETPSTPFVAGFIGTSNVISAPLARIEGAIALLATSADERVLVPLRVPVPPGASISATVRPEKIRLSLHPPDGDRCRLLGVVREVVYLGTATQYVVATSVAEQLVVYAQNDGTADLVPAPGDRIWLWWRPEHGYQLIHADATDVPEEAAP</sequence>
<name>POTA_ACIC1</name>
<gene>
    <name evidence="1" type="primary">potA</name>
    <name type="ordered locus">Acel_1284</name>
</gene>
<keyword id="KW-0067">ATP-binding</keyword>
<keyword id="KW-1003">Cell membrane</keyword>
<keyword id="KW-0472">Membrane</keyword>
<keyword id="KW-0547">Nucleotide-binding</keyword>
<keyword id="KW-1185">Reference proteome</keyword>
<keyword id="KW-1278">Translocase</keyword>
<keyword id="KW-0813">Transport</keyword>
<protein>
    <recommendedName>
        <fullName evidence="1">Spermidine/putrescine import ATP-binding protein PotA</fullName>
        <ecNumber evidence="1">7.6.2.11</ecNumber>
    </recommendedName>
</protein>